<keyword id="KW-0001">2Fe-2S</keyword>
<keyword id="KW-0004">4Fe-4S</keyword>
<keyword id="KW-0408">Iron</keyword>
<keyword id="KW-0411">Iron-sulfur</keyword>
<keyword id="KW-0479">Metal-binding</keyword>
<keyword id="KW-0520">NAD</keyword>
<keyword id="KW-0874">Quinone</keyword>
<keyword id="KW-1278">Translocase</keyword>
<keyword id="KW-0830">Ubiquinone</keyword>
<name>NUOG_PSEFL</name>
<feature type="chain" id="PRO_0000118550" description="NADH-quinone oxidoreductase subunit G">
    <location>
        <begin position="1"/>
        <end position="904"/>
    </location>
</feature>
<feature type="domain" description="2Fe-2S ferredoxin-type" evidence="3">
    <location>
        <begin position="1"/>
        <end position="83"/>
    </location>
</feature>
<feature type="domain" description="4Fe-4S His(Cys)3-ligated-type" evidence="5">
    <location>
        <begin position="83"/>
        <end position="122"/>
    </location>
</feature>
<feature type="domain" description="4Fe-4S Mo/W bis-MGD-type" evidence="4">
    <location>
        <begin position="221"/>
        <end position="277"/>
    </location>
</feature>
<feature type="binding site" evidence="1">
    <location>
        <position position="34"/>
    </location>
    <ligand>
        <name>[2Fe-2S] cluster</name>
        <dbReference type="ChEBI" id="CHEBI:190135"/>
    </ligand>
</feature>
<feature type="binding site" evidence="1">
    <location>
        <position position="45"/>
    </location>
    <ligand>
        <name>[2Fe-2S] cluster</name>
        <dbReference type="ChEBI" id="CHEBI:190135"/>
    </ligand>
</feature>
<feature type="binding site" evidence="1">
    <location>
        <position position="48"/>
    </location>
    <ligand>
        <name>[2Fe-2S] cluster</name>
        <dbReference type="ChEBI" id="CHEBI:190135"/>
    </ligand>
</feature>
<feature type="binding site" evidence="1">
    <location>
        <position position="67"/>
    </location>
    <ligand>
        <name>[2Fe-2S] cluster</name>
        <dbReference type="ChEBI" id="CHEBI:190135"/>
    </ligand>
</feature>
<feature type="binding site" evidence="5">
    <location>
        <position position="99"/>
    </location>
    <ligand>
        <name>[4Fe-4S] cluster</name>
        <dbReference type="ChEBI" id="CHEBI:49883"/>
        <label>1</label>
    </ligand>
</feature>
<feature type="binding site" evidence="5">
    <location>
        <position position="103"/>
    </location>
    <ligand>
        <name>[4Fe-4S] cluster</name>
        <dbReference type="ChEBI" id="CHEBI:49883"/>
        <label>1</label>
    </ligand>
</feature>
<feature type="binding site" evidence="5">
    <location>
        <position position="106"/>
    </location>
    <ligand>
        <name>[4Fe-4S] cluster</name>
        <dbReference type="ChEBI" id="CHEBI:49883"/>
        <label>1</label>
    </ligand>
</feature>
<feature type="binding site" evidence="5">
    <location>
        <position position="112"/>
    </location>
    <ligand>
        <name>[4Fe-4S] cluster</name>
        <dbReference type="ChEBI" id="CHEBI:49883"/>
        <label>1</label>
    </ligand>
</feature>
<feature type="binding site" evidence="1">
    <location>
        <position position="151"/>
    </location>
    <ligand>
        <name>[4Fe-4S] cluster</name>
        <dbReference type="ChEBI" id="CHEBI:49883"/>
        <label>2</label>
    </ligand>
</feature>
<feature type="binding site" evidence="1">
    <location>
        <position position="154"/>
    </location>
    <ligand>
        <name>[4Fe-4S] cluster</name>
        <dbReference type="ChEBI" id="CHEBI:49883"/>
        <label>2</label>
    </ligand>
</feature>
<feature type="binding site" evidence="1">
    <location>
        <position position="157"/>
    </location>
    <ligand>
        <name>[4Fe-4S] cluster</name>
        <dbReference type="ChEBI" id="CHEBI:49883"/>
        <label>2</label>
    </ligand>
</feature>
<feature type="binding site" evidence="1">
    <location>
        <position position="201"/>
    </location>
    <ligand>
        <name>[4Fe-4S] cluster</name>
        <dbReference type="ChEBI" id="CHEBI:49883"/>
        <label>2</label>
    </ligand>
</feature>
<feature type="binding site" evidence="2">
    <location>
        <position position="228"/>
    </location>
    <ligand>
        <name>[4Fe-4S] cluster</name>
        <dbReference type="ChEBI" id="CHEBI:49883"/>
        <label>3</label>
    </ligand>
</feature>
<feature type="binding site" evidence="2">
    <location>
        <position position="231"/>
    </location>
    <ligand>
        <name>[4Fe-4S] cluster</name>
        <dbReference type="ChEBI" id="CHEBI:49883"/>
        <label>3</label>
    </ligand>
</feature>
<feature type="binding site" evidence="2">
    <location>
        <position position="235"/>
    </location>
    <ligand>
        <name>[4Fe-4S] cluster</name>
        <dbReference type="ChEBI" id="CHEBI:49883"/>
        <label>3</label>
    </ligand>
</feature>
<feature type="binding site" evidence="2">
    <location>
        <position position="263"/>
    </location>
    <ligand>
        <name>[4Fe-4S] cluster</name>
        <dbReference type="ChEBI" id="CHEBI:49883"/>
        <label>3</label>
    </ligand>
</feature>
<proteinExistence type="evidence at transcript level"/>
<organism>
    <name type="scientific">Pseudomonas fluorescens</name>
    <dbReference type="NCBI Taxonomy" id="294"/>
    <lineage>
        <taxon>Bacteria</taxon>
        <taxon>Pseudomonadati</taxon>
        <taxon>Pseudomonadota</taxon>
        <taxon>Gammaproteobacteria</taxon>
        <taxon>Pseudomonadales</taxon>
        <taxon>Pseudomonadaceae</taxon>
        <taxon>Pseudomonas</taxon>
    </lineage>
</organism>
<sequence>MATIHVDGKELEVDGADNLLQACLSLGLDIPYFCWHPALGSVGACRQCAVKQYTDENDKRGRIVMSCMTPATDGSWISIDDEEAKVFRASVVEWLMTNHPHDCPVCEEGGHCHLQDMTVMTGHNERRYRFTKRTHQNQDLGPFISHEMNRCIACYRCVRFYKDYAGGTDLGVFGAHDNVYFGRVEDGTLESEFSGNLTEVCPTGVFTDKTHSERYNRKWDMQFSPSICHGCSSGCNISPGERYGELRRIENRFNGSVNQYFLCDRGRFGYGYVNRKDRPRQPLLANGAKLSLDQALDKAAELLRGRNIVGIGSPRASLESNYALRELVGAEHFYSGIEAGELERIRLVLQVLKDSPLPVPNMRDIEDHDAVFVLGEDLTQTAARMALALRQSVKGKAEDMADAMRVQPWLDAAVKNIGQHALNPLFIASLAETKLDDVAEECVHAAPDDLARIGFAVAHALDASAPAVDGLDSEAAALAQRIADALLAAKRPLIIAGTSLGSKALIEAAANIAKALKLREKNGSISLIVPEANSLGLAMLGGESVDAALQAVIDGSADAIVVLENDLYTRTDKAKVDAALNAAKVLIVADHQKTATTDRAHLVLPAASFAEGDGTLVSQEGRAQRFFQVFDPQYLDASILVHEGWRWLHALRATLLDQPIDWTQLDHVTAAVASSSPQLAAIVDAAPSASFRIKGLKLAREPLRYSGRTAMRADISVHEPRTSQDNDTAFSFSMEGYSGSTEPRSQVPFAWSPGWNSPQAWNKFQDEVGGHLRAGDPGTRLIESQGDHLSWFASVPRAFNPAPGTWQVVPFHHLFGSEENSSKAAPVQERIPAAYVSLAKSEADRLGVNDGALLSLNVAGQTLRLPLRINEELGAGLVALPAGLAGIPPAIFGKTVDGLQEAAQ</sequence>
<reference key="1">
    <citation type="journal article" date="2002" name="Mol. Plant Microbe Interact.">
        <title>Characterization of NADH dehydrogenases of Pseudomonas fluorescens WCS365 and their role in competitive root colonization.</title>
        <authorList>
            <person name="Camacho-Carvajal M.M."/>
            <person name="Wijfjes A.H.M."/>
            <person name="Mulders I.H.M."/>
            <person name="Lugtenberg B.J.J."/>
            <person name="Bloemberg G.V."/>
        </authorList>
    </citation>
    <scope>NUCLEOTIDE SEQUENCE [GENOMIC DNA]</scope>
    <scope>FUNCTION</scope>
    <scope>INDUCTION</scope>
    <source>
        <strain>WCS365</strain>
    </source>
</reference>
<evidence type="ECO:0000250" key="1"/>
<evidence type="ECO:0000255" key="2"/>
<evidence type="ECO:0000255" key="3">
    <source>
        <dbReference type="PROSITE-ProRule" id="PRU00465"/>
    </source>
</evidence>
<evidence type="ECO:0000255" key="4">
    <source>
        <dbReference type="PROSITE-ProRule" id="PRU01004"/>
    </source>
</evidence>
<evidence type="ECO:0000255" key="5">
    <source>
        <dbReference type="PROSITE-ProRule" id="PRU01184"/>
    </source>
</evidence>
<evidence type="ECO:0000269" key="6">
    <source>
    </source>
</evidence>
<evidence type="ECO:0000305" key="7"/>
<dbReference type="EC" id="7.1.1.-"/>
<dbReference type="EMBL" id="AF281148">
    <property type="protein sequence ID" value="AAF97803.1"/>
    <property type="molecule type" value="Genomic_DNA"/>
</dbReference>
<dbReference type="SMR" id="Q9KGW3"/>
<dbReference type="PATRIC" id="fig|294.126.peg.2748"/>
<dbReference type="eggNOG" id="COG1034">
    <property type="taxonomic scope" value="Bacteria"/>
</dbReference>
<dbReference type="GO" id="GO:0016020">
    <property type="term" value="C:membrane"/>
    <property type="evidence" value="ECO:0007669"/>
    <property type="project" value="InterPro"/>
</dbReference>
<dbReference type="GO" id="GO:0051537">
    <property type="term" value="F:2 iron, 2 sulfur cluster binding"/>
    <property type="evidence" value="ECO:0007669"/>
    <property type="project" value="UniProtKB-KW"/>
</dbReference>
<dbReference type="GO" id="GO:0051539">
    <property type="term" value="F:4 iron, 4 sulfur cluster binding"/>
    <property type="evidence" value="ECO:0007669"/>
    <property type="project" value="UniProtKB-KW"/>
</dbReference>
<dbReference type="GO" id="GO:0046872">
    <property type="term" value="F:metal ion binding"/>
    <property type="evidence" value="ECO:0007669"/>
    <property type="project" value="UniProtKB-KW"/>
</dbReference>
<dbReference type="GO" id="GO:0008137">
    <property type="term" value="F:NADH dehydrogenase (ubiquinone) activity"/>
    <property type="evidence" value="ECO:0007669"/>
    <property type="project" value="InterPro"/>
</dbReference>
<dbReference type="GO" id="GO:0048038">
    <property type="term" value="F:quinone binding"/>
    <property type="evidence" value="ECO:0007669"/>
    <property type="project" value="UniProtKB-KW"/>
</dbReference>
<dbReference type="GO" id="GO:0042773">
    <property type="term" value="P:ATP synthesis coupled electron transport"/>
    <property type="evidence" value="ECO:0007669"/>
    <property type="project" value="InterPro"/>
</dbReference>
<dbReference type="CDD" id="cd00207">
    <property type="entry name" value="fer2"/>
    <property type="match status" value="1"/>
</dbReference>
<dbReference type="CDD" id="cd02788">
    <property type="entry name" value="MopB_CT_NDH-1_NuoG2-N7"/>
    <property type="match status" value="1"/>
</dbReference>
<dbReference type="CDD" id="cd02771">
    <property type="entry name" value="MopB_NDH-1_NuoG2-N7"/>
    <property type="match status" value="1"/>
</dbReference>
<dbReference type="FunFam" id="2.20.25.90:FF:000003">
    <property type="entry name" value="NADH-quinone oxidoreductase"/>
    <property type="match status" value="1"/>
</dbReference>
<dbReference type="FunFam" id="3.10.20.740:FF:000002">
    <property type="entry name" value="NADH-quinone oxidoreductase"/>
    <property type="match status" value="1"/>
</dbReference>
<dbReference type="FunFam" id="3.40.50.740:FF:000006">
    <property type="entry name" value="NADH-quinone oxidoreductase"/>
    <property type="match status" value="1"/>
</dbReference>
<dbReference type="Gene3D" id="3.10.20.740">
    <property type="match status" value="1"/>
</dbReference>
<dbReference type="Gene3D" id="3.30.200.210">
    <property type="match status" value="1"/>
</dbReference>
<dbReference type="Gene3D" id="3.40.50.740">
    <property type="match status" value="1"/>
</dbReference>
<dbReference type="InterPro" id="IPR036010">
    <property type="entry name" value="2Fe-2S_ferredoxin-like_sf"/>
</dbReference>
<dbReference type="InterPro" id="IPR001041">
    <property type="entry name" value="2Fe-2S_ferredoxin-type"/>
</dbReference>
<dbReference type="InterPro" id="IPR009010">
    <property type="entry name" value="Asp_de-COase-like_dom_sf"/>
</dbReference>
<dbReference type="InterPro" id="IPR006656">
    <property type="entry name" value="Mopterin_OxRdtase"/>
</dbReference>
<dbReference type="InterPro" id="IPR006963">
    <property type="entry name" value="Mopterin_OxRdtase_4Fe-4S_dom"/>
</dbReference>
<dbReference type="InterPro" id="IPR000283">
    <property type="entry name" value="NADH_UbQ_OxRdtase_75kDa_su_CS"/>
</dbReference>
<dbReference type="InterPro" id="IPR054351">
    <property type="entry name" value="NADH_UbQ_OxRdtase_ferredoxin"/>
</dbReference>
<dbReference type="InterPro" id="IPR010228">
    <property type="entry name" value="NADH_UbQ_OxRdtase_Gsu"/>
</dbReference>
<dbReference type="InterPro" id="IPR019574">
    <property type="entry name" value="NADH_UbQ_OxRdtase_Gsu_4Fe4S-bd"/>
</dbReference>
<dbReference type="InterPro" id="IPR050123">
    <property type="entry name" value="Prok_molybdopt-oxidoreductase"/>
</dbReference>
<dbReference type="NCBIfam" id="TIGR01973">
    <property type="entry name" value="NuoG"/>
    <property type="match status" value="1"/>
</dbReference>
<dbReference type="PANTHER" id="PTHR43105:SF10">
    <property type="entry name" value="NADH-QUINONE OXIDOREDUCTASE SUBUNIT G"/>
    <property type="match status" value="1"/>
</dbReference>
<dbReference type="PANTHER" id="PTHR43105">
    <property type="entry name" value="RESPIRATORY NITRATE REDUCTASE"/>
    <property type="match status" value="1"/>
</dbReference>
<dbReference type="Pfam" id="PF13510">
    <property type="entry name" value="Fer2_4"/>
    <property type="match status" value="1"/>
</dbReference>
<dbReference type="Pfam" id="PF22117">
    <property type="entry name" value="Fer4_Nqo3"/>
    <property type="match status" value="1"/>
</dbReference>
<dbReference type="Pfam" id="PF04879">
    <property type="entry name" value="Molybdop_Fe4S4"/>
    <property type="match status" value="1"/>
</dbReference>
<dbReference type="Pfam" id="PF00384">
    <property type="entry name" value="Molybdopterin"/>
    <property type="match status" value="1"/>
</dbReference>
<dbReference type="Pfam" id="PF10588">
    <property type="entry name" value="NADH-G_4Fe-4S_3"/>
    <property type="match status" value="1"/>
</dbReference>
<dbReference type="SMART" id="SM00926">
    <property type="entry name" value="Molybdop_Fe4S4"/>
    <property type="match status" value="1"/>
</dbReference>
<dbReference type="SMART" id="SM00929">
    <property type="entry name" value="NADH-G_4Fe-4S_3"/>
    <property type="match status" value="1"/>
</dbReference>
<dbReference type="SUPFAM" id="SSF54292">
    <property type="entry name" value="2Fe-2S ferredoxin-like"/>
    <property type="match status" value="1"/>
</dbReference>
<dbReference type="SUPFAM" id="SSF54862">
    <property type="entry name" value="4Fe-4S ferredoxins"/>
    <property type="match status" value="1"/>
</dbReference>
<dbReference type="SUPFAM" id="SSF50692">
    <property type="entry name" value="ADC-like"/>
    <property type="match status" value="1"/>
</dbReference>
<dbReference type="SUPFAM" id="SSF53706">
    <property type="entry name" value="Formate dehydrogenase/DMSO reductase, domains 1-3"/>
    <property type="match status" value="1"/>
</dbReference>
<dbReference type="PROSITE" id="PS51085">
    <property type="entry name" value="2FE2S_FER_2"/>
    <property type="match status" value="1"/>
</dbReference>
<dbReference type="PROSITE" id="PS51839">
    <property type="entry name" value="4FE4S_HC3"/>
    <property type="match status" value="1"/>
</dbReference>
<dbReference type="PROSITE" id="PS51669">
    <property type="entry name" value="4FE4S_MOW_BIS_MGD"/>
    <property type="match status" value="1"/>
</dbReference>
<dbReference type="PROSITE" id="PS00641">
    <property type="entry name" value="COMPLEX1_75K_1"/>
    <property type="match status" value="1"/>
</dbReference>
<dbReference type="PROSITE" id="PS00642">
    <property type="entry name" value="COMPLEX1_75K_2"/>
    <property type="match status" value="1"/>
</dbReference>
<dbReference type="PROSITE" id="PS00643">
    <property type="entry name" value="COMPLEX1_75K_3"/>
    <property type="match status" value="1"/>
</dbReference>
<comment type="function">
    <text evidence="1 6">NDH-1 shuttles electrons from NADH, via FMN and iron-sulfur (Fe-S) centers, to quinones in the respiratory chain. The immediate electron acceptor for the enzyme in this species is believed to be ubiquinone. Couples the redox reaction to proton translocation (for every two electrons transferred, four hydrogen ions are translocated across the cytoplasmic membrane), and thus conserves the redox energy in a proton gradient (By similarity). Required for plants roots colonization.</text>
</comment>
<comment type="catalytic activity">
    <reaction>
        <text>a quinone + NADH + 5 H(+)(in) = a quinol + NAD(+) + 4 H(+)(out)</text>
        <dbReference type="Rhea" id="RHEA:57888"/>
        <dbReference type="ChEBI" id="CHEBI:15378"/>
        <dbReference type="ChEBI" id="CHEBI:24646"/>
        <dbReference type="ChEBI" id="CHEBI:57540"/>
        <dbReference type="ChEBI" id="CHEBI:57945"/>
        <dbReference type="ChEBI" id="CHEBI:132124"/>
    </reaction>
</comment>
<comment type="cofactor">
    <cofactor evidence="1">
        <name>[2Fe-2S] cluster</name>
        <dbReference type="ChEBI" id="CHEBI:190135"/>
    </cofactor>
    <text evidence="1">Binds 1 [2Fe-2S] cluster per subunit.</text>
</comment>
<comment type="cofactor">
    <cofactor evidence="1">
        <name>[4Fe-4S] cluster</name>
        <dbReference type="ChEBI" id="CHEBI:49883"/>
    </cofactor>
    <text evidence="1">Binds 3 [4Fe-4S] clusters per subunit.</text>
</comment>
<comment type="subunit">
    <text>Composed of 13 different subunits. Subunits NuoCD, E, F, and G constitute the peripheral sector of the complex.</text>
</comment>
<comment type="induction">
    <text evidence="6">By low oxygen growth conditions, especially in rhizosphere.</text>
</comment>
<comment type="similarity">
    <text evidence="7">Belongs to the complex I 75 kDa subunit family.</text>
</comment>
<accession>Q9KGW3</accession>
<protein>
    <recommendedName>
        <fullName>NADH-quinone oxidoreductase subunit G</fullName>
        <ecNumber>7.1.1.-</ecNumber>
    </recommendedName>
    <alternativeName>
        <fullName>NADH dehydrogenase I subunit G</fullName>
    </alternativeName>
    <alternativeName>
        <fullName>NDH-1 subunit G</fullName>
    </alternativeName>
</protein>
<gene>
    <name type="primary">nuoG</name>
</gene>